<gene>
    <name type="primary">GPR31</name>
</gene>
<comment type="function">
    <text evidence="1 5 6 7 8">High-affinity receptor for 12-(S)-hydroxy-5,8,10,14-eicosatetraenoic acid (12-S-HETE), with much lower affinities for other HETE isomers (PubMed:21712392, PubMed:29227475). 12-S-HETE is a eicosanoid, a 12-lipoxygenase (ALOX12) metabolite of arachidonic acid, involved in many physiologic and pathologic processes (PubMed:26965684, PubMed:28619714, PubMed:29227475). 12-S-HETE-binding leads to activation of ERK1/2 (MAPK3/MAPK1), MEK, and NF-kappa-B pathways leading to cell growth (PubMed:21712392, PubMed:29227475). Plays a crucial role for proliferation, survival and macropinocytosis of KRAS-dependent cancer cells by mediating the translocation of KRAS from the endoplasmic reticulum to the plasma membrane (PM) and its association with the PM (PubMed:28619714). Contributes to enhanced immune responses by inducing dendrite protrusion of small intestinal CX3CR1(+) phagocytes for the uptake of luminal antigens (By similarity). Acts also as a key receptor for 12-(S)-HETE-mediated liver ischemia reperfusion injury (PubMed:29227475).</text>
</comment>
<comment type="function">
    <text evidence="9">Proton-sensing G protein-coupled receptor.</text>
</comment>
<comment type="subunit">
    <text evidence="7">Interacts with KRAS; in a farnesylation-dependent manner.</text>
</comment>
<comment type="interaction">
    <interactant intactId="EBI-34583813">
        <id>O00270</id>
    </interactant>
    <interactant intactId="EBI-367427">
        <id>P01116-2</id>
        <label>KRAS</label>
    </interactant>
    <organismsDiffer>false</organismsDiffer>
    <experiments>4</experiments>
</comment>
<comment type="subcellular location">
    <subcellularLocation>
        <location evidence="5 7 9">Cell membrane</location>
        <topology evidence="2">Multi-pass membrane protein</topology>
    </subcellularLocation>
</comment>
<comment type="induction">
    <text evidence="6">Up-regulated in prostate cancer.</text>
</comment>
<comment type="similarity">
    <text evidence="3">Belongs to the G-protein coupled receptor 1 family.</text>
</comment>
<sequence length="319" mass="35075">MPFPNCSAPSTVVATAVGVLLGLECGLGLLGNAVALWTFLFRVRVWKPYAVYLLNLALADLLLAACLPFLAAFYLSLQAWHLGRVGCWALHFLLDLSRSVGMAFLAAVALDRYLRVVHPRLKVNLLSPQAALGVSGLVWLLMVALTCPGLLISEAAQNSTRCHSFYSRADGSFSIIWQEALSCLQFVLPFGLIVFCNAGIIRALQKRLREPEKQPKLQRAQALVTLVVVLFALCFLPCFLARVLMHIFQNLGSCRALCAVAHTSDVTGSLTYLHSVLNPVVYCFSSPTFRSSYRRVFHTLRGKGQAAEPPDFNPRDSYS</sequence>
<organism>
    <name type="scientific">Homo sapiens</name>
    <name type="common">Human</name>
    <dbReference type="NCBI Taxonomy" id="9606"/>
    <lineage>
        <taxon>Eukaryota</taxon>
        <taxon>Metazoa</taxon>
        <taxon>Chordata</taxon>
        <taxon>Craniata</taxon>
        <taxon>Vertebrata</taxon>
        <taxon>Euteleostomi</taxon>
        <taxon>Mammalia</taxon>
        <taxon>Eutheria</taxon>
        <taxon>Euarchontoglires</taxon>
        <taxon>Primates</taxon>
        <taxon>Haplorrhini</taxon>
        <taxon>Catarrhini</taxon>
        <taxon>Hominidae</taxon>
        <taxon>Homo</taxon>
    </lineage>
</organism>
<keyword id="KW-1003">Cell membrane</keyword>
<keyword id="KW-0297">G-protein coupled receptor</keyword>
<keyword id="KW-0325">Glycoprotein</keyword>
<keyword id="KW-0443">Lipid metabolism</keyword>
<keyword id="KW-0472">Membrane</keyword>
<keyword id="KW-1267">Proteomics identification</keyword>
<keyword id="KW-0675">Receptor</keyword>
<keyword id="KW-1185">Reference proteome</keyword>
<keyword id="KW-0807">Transducer</keyword>
<keyword id="KW-0812">Transmembrane</keyword>
<keyword id="KW-1133">Transmembrane helix</keyword>
<feature type="chain" id="PRO_0000069551" description="12-(S)-hydroxy-5,8,10,14-eicosatetraenoic acid receptor">
    <location>
        <begin position="1"/>
        <end position="319"/>
    </location>
</feature>
<feature type="topological domain" description="Extracellular" evidence="2">
    <location>
        <begin position="1"/>
        <end position="16"/>
    </location>
</feature>
<feature type="transmembrane region" description="Helical; Name=1" evidence="2">
    <location>
        <begin position="17"/>
        <end position="37"/>
    </location>
</feature>
<feature type="topological domain" description="Cytoplasmic" evidence="2">
    <location>
        <begin position="38"/>
        <end position="52"/>
    </location>
</feature>
<feature type="transmembrane region" description="Helical; Name=2" evidence="2">
    <location>
        <begin position="53"/>
        <end position="73"/>
    </location>
</feature>
<feature type="topological domain" description="Extracellular" evidence="2">
    <location>
        <begin position="74"/>
        <end position="91"/>
    </location>
</feature>
<feature type="transmembrane region" description="Helical; Name=3" evidence="2">
    <location>
        <begin position="92"/>
        <end position="110"/>
    </location>
</feature>
<feature type="topological domain" description="Cytoplasmic" evidence="2">
    <location>
        <begin position="111"/>
        <end position="131"/>
    </location>
</feature>
<feature type="transmembrane region" description="Helical; Name=4" evidence="2">
    <location>
        <begin position="132"/>
        <end position="152"/>
    </location>
</feature>
<feature type="topological domain" description="Extracellular" evidence="2">
    <location>
        <begin position="153"/>
        <end position="180"/>
    </location>
</feature>
<feature type="transmembrane region" description="Helical; Name=5" evidence="2">
    <location>
        <begin position="181"/>
        <end position="201"/>
    </location>
</feature>
<feature type="topological domain" description="Cytoplasmic" evidence="2">
    <location>
        <begin position="202"/>
        <end position="219"/>
    </location>
</feature>
<feature type="transmembrane region" description="Helical; Name=6" evidence="2">
    <location>
        <begin position="220"/>
        <end position="240"/>
    </location>
</feature>
<feature type="topological domain" description="Extracellular" evidence="2">
    <location>
        <begin position="241"/>
        <end position="265"/>
    </location>
</feature>
<feature type="transmembrane region" description="Helical; Name=7" evidence="2">
    <location>
        <begin position="266"/>
        <end position="284"/>
    </location>
</feature>
<feature type="topological domain" description="Cytoplasmic" evidence="2">
    <location>
        <begin position="285"/>
        <end position="319"/>
    </location>
</feature>
<feature type="glycosylation site" description="N-linked (GlcNAc...) asparagine" evidence="2">
    <location>
        <position position="5"/>
    </location>
</feature>
<feature type="sequence variant" id="VAR_049392" description="In dbSNP:rs6902566." evidence="4 10 11 12">
    <original>H</original>
    <variation>R</variation>
    <location>
        <position position="91"/>
    </location>
</feature>
<feature type="sequence conflict" description="In Ref. 5; AAH95537." evidence="16" ref="5">
    <original>F</original>
    <variation>L</variation>
    <location>
        <position position="73"/>
    </location>
</feature>
<feature type="sequence conflict" description="In Ref. 1; AAC51375." evidence="16" ref="1">
    <original>L</original>
    <variation>V</variation>
    <location>
        <position position="277"/>
    </location>
</feature>
<dbReference type="EMBL" id="U65402">
    <property type="protein sequence ID" value="AAC51375.1"/>
    <property type="molecule type" value="Genomic_DNA"/>
</dbReference>
<dbReference type="EMBL" id="EU432117">
    <property type="protein sequence ID" value="ABY87916.1"/>
    <property type="molecule type" value="Genomic_DNA"/>
</dbReference>
<dbReference type="EMBL" id="AL121935">
    <property type="status" value="NOT_ANNOTATED_CDS"/>
    <property type="molecule type" value="Genomic_DNA"/>
</dbReference>
<dbReference type="EMBL" id="CH471051">
    <property type="protein sequence ID" value="EAW47505.1"/>
    <property type="molecule type" value="Genomic_DNA"/>
</dbReference>
<dbReference type="EMBL" id="BC095537">
    <property type="protein sequence ID" value="AAH95537.1"/>
    <property type="molecule type" value="mRNA"/>
</dbReference>
<dbReference type="CCDS" id="CCDS5299.1"/>
<dbReference type="RefSeq" id="NP_005290.2">
    <property type="nucleotide sequence ID" value="NM_005299.3"/>
</dbReference>
<dbReference type="SMR" id="O00270"/>
<dbReference type="BioGRID" id="109111">
    <property type="interactions" value="3"/>
</dbReference>
<dbReference type="CORUM" id="O00270"/>
<dbReference type="FunCoup" id="O00270">
    <property type="interactions" value="238"/>
</dbReference>
<dbReference type="IntAct" id="O00270">
    <property type="interactions" value="3"/>
</dbReference>
<dbReference type="STRING" id="9606.ENSP00000355799"/>
<dbReference type="ChEMBL" id="CHEMBL4523859"/>
<dbReference type="GlyCosmos" id="O00270">
    <property type="glycosylation" value="1 site, No reported glycans"/>
</dbReference>
<dbReference type="GlyGen" id="O00270">
    <property type="glycosylation" value="1 site"/>
</dbReference>
<dbReference type="BioMuta" id="GPR31"/>
<dbReference type="jPOST" id="O00270"/>
<dbReference type="PaxDb" id="9606-ENSP00000355799"/>
<dbReference type="PeptideAtlas" id="O00270"/>
<dbReference type="Antibodypedia" id="2933">
    <property type="antibodies" value="115 antibodies from 26 providers"/>
</dbReference>
<dbReference type="DNASU" id="2853"/>
<dbReference type="Ensembl" id="ENST00000366834.2">
    <property type="protein sequence ID" value="ENSP00000355799.2"/>
    <property type="gene ID" value="ENSG00000120436.4"/>
</dbReference>
<dbReference type="GeneID" id="2853"/>
<dbReference type="KEGG" id="hsa:2853"/>
<dbReference type="MANE-Select" id="ENST00000366834.2">
    <property type="protein sequence ID" value="ENSP00000355799.2"/>
    <property type="RefSeq nucleotide sequence ID" value="NM_005299.3"/>
    <property type="RefSeq protein sequence ID" value="NP_005290.2"/>
</dbReference>
<dbReference type="UCSC" id="uc011egq.3">
    <property type="organism name" value="human"/>
</dbReference>
<dbReference type="AGR" id="HGNC:4486"/>
<dbReference type="CTD" id="2853"/>
<dbReference type="DisGeNET" id="2853"/>
<dbReference type="GeneCards" id="GPR31"/>
<dbReference type="HGNC" id="HGNC:4486">
    <property type="gene designation" value="GPR31"/>
</dbReference>
<dbReference type="HPA" id="ENSG00000120436">
    <property type="expression patterns" value="Tissue enhanced (lymphoid)"/>
</dbReference>
<dbReference type="MIM" id="602043">
    <property type="type" value="gene"/>
</dbReference>
<dbReference type="neXtProt" id="NX_O00270"/>
<dbReference type="OpenTargets" id="ENSG00000120436"/>
<dbReference type="PharmGKB" id="PA28874"/>
<dbReference type="VEuPathDB" id="HostDB:ENSG00000120436"/>
<dbReference type="eggNOG" id="KOG3656">
    <property type="taxonomic scope" value="Eukaryota"/>
</dbReference>
<dbReference type="GeneTree" id="ENSGT00990000203619"/>
<dbReference type="HOGENOM" id="CLU_009579_8_2_1"/>
<dbReference type="InParanoid" id="O00270"/>
<dbReference type="OMA" id="CLPIKAH"/>
<dbReference type="OrthoDB" id="8895966at2759"/>
<dbReference type="PAN-GO" id="O00270">
    <property type="GO annotations" value="4 GO annotations based on evolutionary models"/>
</dbReference>
<dbReference type="PhylomeDB" id="O00270"/>
<dbReference type="TreeFam" id="TF337237"/>
<dbReference type="PathwayCommons" id="O00270"/>
<dbReference type="Reactome" id="R-HSA-418594">
    <property type="pathway name" value="G alpha (i) signalling events"/>
</dbReference>
<dbReference type="Reactome" id="R-HSA-444209">
    <property type="pathway name" value="Free fatty acid receptors"/>
</dbReference>
<dbReference type="BioGRID-ORCS" id="2853">
    <property type="hits" value="18 hits in 1144 CRISPR screens"/>
</dbReference>
<dbReference type="GeneWiki" id="GPR31"/>
<dbReference type="GenomeRNAi" id="2853"/>
<dbReference type="Pharos" id="O00270">
    <property type="development level" value="Tbio"/>
</dbReference>
<dbReference type="PRO" id="PR:O00270"/>
<dbReference type="Proteomes" id="UP000005640">
    <property type="component" value="Chromosome 6"/>
</dbReference>
<dbReference type="RNAct" id="O00270">
    <property type="molecule type" value="protein"/>
</dbReference>
<dbReference type="Bgee" id="ENSG00000120436">
    <property type="expression patterns" value="Expressed in lymph node and 8 other cell types or tissues"/>
</dbReference>
<dbReference type="GO" id="GO:0005886">
    <property type="term" value="C:plasma membrane"/>
    <property type="evidence" value="ECO:0000314"/>
    <property type="project" value="UniProtKB"/>
</dbReference>
<dbReference type="GO" id="GO:0050544">
    <property type="term" value="F:arachidonate binding"/>
    <property type="evidence" value="ECO:0000314"/>
    <property type="project" value="UniProtKB"/>
</dbReference>
<dbReference type="GO" id="GO:0045125">
    <property type="term" value="F:bioactive lipid receptor activity"/>
    <property type="evidence" value="ECO:0000318"/>
    <property type="project" value="GO_Central"/>
</dbReference>
<dbReference type="GO" id="GO:0004930">
    <property type="term" value="F:G protein-coupled receptor activity"/>
    <property type="evidence" value="ECO:0000314"/>
    <property type="project" value="UniProtKB"/>
</dbReference>
<dbReference type="GO" id="GO:0007186">
    <property type="term" value="P:G protein-coupled receptor signaling pathway"/>
    <property type="evidence" value="ECO:0000314"/>
    <property type="project" value="UniProtKB"/>
</dbReference>
<dbReference type="GO" id="GO:0006629">
    <property type="term" value="P:lipid metabolic process"/>
    <property type="evidence" value="ECO:0007669"/>
    <property type="project" value="UniProtKB-KW"/>
</dbReference>
<dbReference type="GO" id="GO:0050728">
    <property type="term" value="P:negative regulation of inflammatory response"/>
    <property type="evidence" value="ECO:0000250"/>
    <property type="project" value="UniProtKB"/>
</dbReference>
<dbReference type="GO" id="GO:0050778">
    <property type="term" value="P:positive regulation of immune response"/>
    <property type="evidence" value="ECO:0007669"/>
    <property type="project" value="Ensembl"/>
</dbReference>
<dbReference type="GO" id="GO:0010447">
    <property type="term" value="P:response to acidic pH"/>
    <property type="evidence" value="ECO:0000314"/>
    <property type="project" value="UniProtKB"/>
</dbReference>
<dbReference type="GO" id="GO:0002931">
    <property type="term" value="P:response to ischemia"/>
    <property type="evidence" value="ECO:0007669"/>
    <property type="project" value="Ensembl"/>
</dbReference>
<dbReference type="GO" id="GO:0002237">
    <property type="term" value="P:response to molecule of bacterial origin"/>
    <property type="evidence" value="ECO:0000250"/>
    <property type="project" value="UniProtKB"/>
</dbReference>
<dbReference type="CDD" id="cd15199">
    <property type="entry name" value="7tmA_GPR31"/>
    <property type="match status" value="1"/>
</dbReference>
<dbReference type="FunFam" id="1.20.1070.10:FF:000483">
    <property type="entry name" value="G protein-coupled receptor 31"/>
    <property type="match status" value="1"/>
</dbReference>
<dbReference type="Gene3D" id="1.20.1070.10">
    <property type="entry name" value="Rhodopsin 7-helix transmembrane proteins"/>
    <property type="match status" value="1"/>
</dbReference>
<dbReference type="InterPro" id="IPR000276">
    <property type="entry name" value="GPCR_Rhodpsn"/>
</dbReference>
<dbReference type="InterPro" id="IPR017452">
    <property type="entry name" value="GPCR_Rhodpsn_7TM"/>
</dbReference>
<dbReference type="InterPro" id="IPR051893">
    <property type="entry name" value="HCARs"/>
</dbReference>
<dbReference type="PANTHER" id="PTHR46048:SF7">
    <property type="entry name" value="12-(S)-HYDROXY-5,8,10,14-EICOSATETRAENOIC ACID RECEPTOR"/>
    <property type="match status" value="1"/>
</dbReference>
<dbReference type="PANTHER" id="PTHR46048">
    <property type="entry name" value="HYDROXYCARBOXYLIC ACID RECEPTOR 2"/>
    <property type="match status" value="1"/>
</dbReference>
<dbReference type="Pfam" id="PF00001">
    <property type="entry name" value="7tm_1"/>
    <property type="match status" value="1"/>
</dbReference>
<dbReference type="PRINTS" id="PR00237">
    <property type="entry name" value="GPCRRHODOPSN"/>
</dbReference>
<dbReference type="SUPFAM" id="SSF81321">
    <property type="entry name" value="Family A G protein-coupled receptor-like"/>
    <property type="match status" value="1"/>
</dbReference>
<dbReference type="PROSITE" id="PS00237">
    <property type="entry name" value="G_PROTEIN_RECEP_F1_1"/>
    <property type="match status" value="1"/>
</dbReference>
<dbReference type="PROSITE" id="PS50262">
    <property type="entry name" value="G_PROTEIN_RECEP_F1_2"/>
    <property type="match status" value="1"/>
</dbReference>
<proteinExistence type="evidence at protein level"/>
<evidence type="ECO:0000250" key="1">
    <source>
        <dbReference type="UniProtKB" id="F8VQN3"/>
    </source>
</evidence>
<evidence type="ECO:0000255" key="2"/>
<evidence type="ECO:0000255" key="3">
    <source>
        <dbReference type="PROSITE-ProRule" id="PRU00521"/>
    </source>
</evidence>
<evidence type="ECO:0000269" key="4">
    <source>
    </source>
</evidence>
<evidence type="ECO:0000269" key="5">
    <source>
    </source>
</evidence>
<evidence type="ECO:0000269" key="6">
    <source>
    </source>
</evidence>
<evidence type="ECO:0000269" key="7">
    <source>
    </source>
</evidence>
<evidence type="ECO:0000269" key="8">
    <source>
    </source>
</evidence>
<evidence type="ECO:0000269" key="9">
    <source>
    </source>
</evidence>
<evidence type="ECO:0000269" key="10">
    <source>
    </source>
</evidence>
<evidence type="ECO:0000269" key="11">
    <source ref="2"/>
</evidence>
<evidence type="ECO:0000269" key="12">
    <source ref="4"/>
</evidence>
<evidence type="ECO:0000303" key="13">
    <source>
    </source>
</evidence>
<evidence type="ECO:0000303" key="14">
    <source>
    </source>
</evidence>
<evidence type="ECO:0000303" key="15">
    <source>
    </source>
</evidence>
<evidence type="ECO:0000305" key="16"/>
<accession>O00270</accession>
<accession>B0M0K2</accession>
<accession>Q4VBL3</accession>
<accession>Q9NQ20</accession>
<reference key="1">
    <citation type="journal article" date="1997" name="Genomics">
        <title>Isolation and chromosomal localization of GPR31, a human gene encoding a putative G protein-coupled receptor.</title>
        <authorList>
            <person name="Zingoni A."/>
            <person name="Rocchi M."/>
            <person name="Storlazzi C.T."/>
            <person name="Bernardini G."/>
            <person name="Santoni A."/>
            <person name="Napolitano M."/>
        </authorList>
    </citation>
    <scope>NUCLEOTIDE SEQUENCE [GENOMIC DNA]</scope>
    <scope>VARIANT ARG-91</scope>
    <source>
        <tissue>Placenta</tissue>
    </source>
</reference>
<reference key="2">
    <citation type="submission" date="2007-12" db="EMBL/GenBank/DDBJ databases">
        <authorList>
            <person name="Kaighin V.A."/>
            <person name="Martin A.L."/>
            <person name="Aronstam R.S."/>
        </authorList>
    </citation>
    <scope>NUCLEOTIDE SEQUENCE [GENOMIC DNA]</scope>
    <scope>VARIANT ARG-91</scope>
</reference>
<reference key="3">
    <citation type="journal article" date="2003" name="Nature">
        <title>The DNA sequence and analysis of human chromosome 6.</title>
        <authorList>
            <person name="Mungall A.J."/>
            <person name="Palmer S.A."/>
            <person name="Sims S.K."/>
            <person name="Edwards C.A."/>
            <person name="Ashurst J.L."/>
            <person name="Wilming L."/>
            <person name="Jones M.C."/>
            <person name="Horton R."/>
            <person name="Hunt S.E."/>
            <person name="Scott C.E."/>
            <person name="Gilbert J.G.R."/>
            <person name="Clamp M.E."/>
            <person name="Bethel G."/>
            <person name="Milne S."/>
            <person name="Ainscough R."/>
            <person name="Almeida J.P."/>
            <person name="Ambrose K.D."/>
            <person name="Andrews T.D."/>
            <person name="Ashwell R.I.S."/>
            <person name="Babbage A.K."/>
            <person name="Bagguley C.L."/>
            <person name="Bailey J."/>
            <person name="Banerjee R."/>
            <person name="Barker D.J."/>
            <person name="Barlow K.F."/>
            <person name="Bates K."/>
            <person name="Beare D.M."/>
            <person name="Beasley H."/>
            <person name="Beasley O."/>
            <person name="Bird C.P."/>
            <person name="Blakey S.E."/>
            <person name="Bray-Allen S."/>
            <person name="Brook J."/>
            <person name="Brown A.J."/>
            <person name="Brown J.Y."/>
            <person name="Burford D.C."/>
            <person name="Burrill W."/>
            <person name="Burton J."/>
            <person name="Carder C."/>
            <person name="Carter N.P."/>
            <person name="Chapman J.C."/>
            <person name="Clark S.Y."/>
            <person name="Clark G."/>
            <person name="Clee C.M."/>
            <person name="Clegg S."/>
            <person name="Cobley V."/>
            <person name="Collier R.E."/>
            <person name="Collins J.E."/>
            <person name="Colman L.K."/>
            <person name="Corby N.R."/>
            <person name="Coville G.J."/>
            <person name="Culley K.M."/>
            <person name="Dhami P."/>
            <person name="Davies J."/>
            <person name="Dunn M."/>
            <person name="Earthrowl M.E."/>
            <person name="Ellington A.E."/>
            <person name="Evans K.A."/>
            <person name="Faulkner L."/>
            <person name="Francis M.D."/>
            <person name="Frankish A."/>
            <person name="Frankland J."/>
            <person name="French L."/>
            <person name="Garner P."/>
            <person name="Garnett J."/>
            <person name="Ghori M.J."/>
            <person name="Gilby L.M."/>
            <person name="Gillson C.J."/>
            <person name="Glithero R.J."/>
            <person name="Grafham D.V."/>
            <person name="Grant M."/>
            <person name="Gribble S."/>
            <person name="Griffiths C."/>
            <person name="Griffiths M.N.D."/>
            <person name="Hall R."/>
            <person name="Halls K.S."/>
            <person name="Hammond S."/>
            <person name="Harley J.L."/>
            <person name="Hart E.A."/>
            <person name="Heath P.D."/>
            <person name="Heathcott R."/>
            <person name="Holmes S.J."/>
            <person name="Howden P.J."/>
            <person name="Howe K.L."/>
            <person name="Howell G.R."/>
            <person name="Huckle E."/>
            <person name="Humphray S.J."/>
            <person name="Humphries M.D."/>
            <person name="Hunt A.R."/>
            <person name="Johnson C.M."/>
            <person name="Joy A.A."/>
            <person name="Kay M."/>
            <person name="Keenan S.J."/>
            <person name="Kimberley A.M."/>
            <person name="King A."/>
            <person name="Laird G.K."/>
            <person name="Langford C."/>
            <person name="Lawlor S."/>
            <person name="Leongamornlert D.A."/>
            <person name="Leversha M."/>
            <person name="Lloyd C.R."/>
            <person name="Lloyd D.M."/>
            <person name="Loveland J.E."/>
            <person name="Lovell J."/>
            <person name="Martin S."/>
            <person name="Mashreghi-Mohammadi M."/>
            <person name="Maslen G.L."/>
            <person name="Matthews L."/>
            <person name="McCann O.T."/>
            <person name="McLaren S.J."/>
            <person name="McLay K."/>
            <person name="McMurray A."/>
            <person name="Moore M.J.F."/>
            <person name="Mullikin J.C."/>
            <person name="Niblett D."/>
            <person name="Nickerson T."/>
            <person name="Novik K.L."/>
            <person name="Oliver K."/>
            <person name="Overton-Larty E.K."/>
            <person name="Parker A."/>
            <person name="Patel R."/>
            <person name="Pearce A.V."/>
            <person name="Peck A.I."/>
            <person name="Phillimore B.J.C.T."/>
            <person name="Phillips S."/>
            <person name="Plumb R.W."/>
            <person name="Porter K.M."/>
            <person name="Ramsey Y."/>
            <person name="Ranby S.A."/>
            <person name="Rice C.M."/>
            <person name="Ross M.T."/>
            <person name="Searle S.M."/>
            <person name="Sehra H.K."/>
            <person name="Sheridan E."/>
            <person name="Skuce C.D."/>
            <person name="Smith S."/>
            <person name="Smith M."/>
            <person name="Spraggon L."/>
            <person name="Squares S.L."/>
            <person name="Steward C.A."/>
            <person name="Sycamore N."/>
            <person name="Tamlyn-Hall G."/>
            <person name="Tester J."/>
            <person name="Theaker A.J."/>
            <person name="Thomas D.W."/>
            <person name="Thorpe A."/>
            <person name="Tracey A."/>
            <person name="Tromans A."/>
            <person name="Tubby B."/>
            <person name="Wall M."/>
            <person name="Wallis J.M."/>
            <person name="West A.P."/>
            <person name="White S.S."/>
            <person name="Whitehead S.L."/>
            <person name="Whittaker H."/>
            <person name="Wild A."/>
            <person name="Willey D.J."/>
            <person name="Wilmer T.E."/>
            <person name="Wood J.M."/>
            <person name="Wray P.W."/>
            <person name="Wyatt J.C."/>
            <person name="Young L."/>
            <person name="Younger R.M."/>
            <person name="Bentley D.R."/>
            <person name="Coulson A."/>
            <person name="Durbin R.M."/>
            <person name="Hubbard T."/>
            <person name="Sulston J.E."/>
            <person name="Dunham I."/>
            <person name="Rogers J."/>
            <person name="Beck S."/>
        </authorList>
    </citation>
    <scope>NUCLEOTIDE SEQUENCE [LARGE SCALE GENOMIC DNA]</scope>
</reference>
<reference key="4">
    <citation type="submission" date="2005-09" db="EMBL/GenBank/DDBJ databases">
        <authorList>
            <person name="Mural R.J."/>
            <person name="Istrail S."/>
            <person name="Sutton G.G."/>
            <person name="Florea L."/>
            <person name="Halpern A.L."/>
            <person name="Mobarry C.M."/>
            <person name="Lippert R."/>
            <person name="Walenz B."/>
            <person name="Shatkay H."/>
            <person name="Dew I."/>
            <person name="Miller J.R."/>
            <person name="Flanigan M.J."/>
            <person name="Edwards N.J."/>
            <person name="Bolanos R."/>
            <person name="Fasulo D."/>
            <person name="Halldorsson B.V."/>
            <person name="Hannenhalli S."/>
            <person name="Turner R."/>
            <person name="Yooseph S."/>
            <person name="Lu F."/>
            <person name="Nusskern D.R."/>
            <person name="Shue B.C."/>
            <person name="Zheng X.H."/>
            <person name="Zhong F."/>
            <person name="Delcher A.L."/>
            <person name="Huson D.H."/>
            <person name="Kravitz S.A."/>
            <person name="Mouchard L."/>
            <person name="Reinert K."/>
            <person name="Remington K.A."/>
            <person name="Clark A.G."/>
            <person name="Waterman M.S."/>
            <person name="Eichler E.E."/>
            <person name="Adams M.D."/>
            <person name="Hunkapiller M.W."/>
            <person name="Myers E.W."/>
            <person name="Venter J.C."/>
        </authorList>
    </citation>
    <scope>NUCLEOTIDE SEQUENCE [LARGE SCALE GENOMIC DNA]</scope>
    <scope>VARIANT ARG-91</scope>
</reference>
<reference key="5">
    <citation type="journal article" date="2004" name="Genome Res.">
        <title>The status, quality, and expansion of the NIH full-length cDNA project: the Mammalian Gene Collection (MGC).</title>
        <authorList>
            <consortium name="The MGC Project Team"/>
        </authorList>
    </citation>
    <scope>NUCLEOTIDE SEQUENCE [LARGE SCALE MRNA]</scope>
    <scope>VARIANT ARG-91</scope>
</reference>
<reference key="6">
    <citation type="journal article" date="2011" name="J. Biol. Chem.">
        <title>Identification of the orphan G protein-coupled receptor GPR31 as a receptor for 12-(S)-hydroxyeicosatetraenoic acid.</title>
        <authorList>
            <person name="Guo Y."/>
            <person name="Zhang W."/>
            <person name="Giroux C."/>
            <person name="Cai Y."/>
            <person name="Ekambaram P."/>
            <person name="Dilly A.K."/>
            <person name="Hsu A."/>
            <person name="Zhou S."/>
            <person name="Maddipati K.R."/>
            <person name="Liu J."/>
            <person name="Joshi S."/>
            <person name="Tucker S.C."/>
            <person name="Lee M.J."/>
            <person name="Honn K.V."/>
        </authorList>
    </citation>
    <scope>FUNCTION</scope>
    <scope>SUBCELLULAR LOCATION</scope>
</reference>
<reference key="7">
    <citation type="journal article" date="2016" name="FASEB J.">
        <title>12-HETER1/GPR31, a high-affinity 12(S)-hydroxyeicosatetraenoic acid receptor, is significantly up-regulated in prostate cancer and plays a critical role in prostate cancer progression.</title>
        <authorList>
            <person name="Honn K.V."/>
            <person name="Guo Y."/>
            <person name="Cai Y."/>
            <person name="Lee M.J."/>
            <person name="Dyson G."/>
            <person name="Zhang W."/>
            <person name="Tucker S.C."/>
        </authorList>
    </citation>
    <scope>INDUCTION</scope>
    <scope>FUNCTION</scope>
</reference>
<reference key="8">
    <citation type="journal article" date="2017" name="J. Cell Biol.">
        <title>The G protein-coupled receptor GPR31 promotes membrane association of KRAS.</title>
        <authorList>
            <person name="Fehrenbacher N."/>
            <person name="Tojal da Silva I."/>
            <person name="Ramirez C."/>
            <person name="Zhou Y."/>
            <person name="Cho K.J."/>
            <person name="Kuchay S."/>
            <person name="Shi J."/>
            <person name="Thomas S."/>
            <person name="Pagano M."/>
            <person name="Hancock J.F."/>
            <person name="Bar-Sagi D."/>
            <person name="Philips M.R."/>
        </authorList>
    </citation>
    <scope>SUBCELLULAR LOCATION</scope>
    <scope>INTERACTION WITH KRAS</scope>
    <scope>FUNCTION</scope>
</reference>
<reference key="9">
    <citation type="journal article" date="2018" name="Nat. Med.">
        <title>An ALOX12-12-HETE-GPR31 signaling axis is a key mediator of hepatic ischemia-reperfusion injury.</title>
        <authorList>
            <person name="Zhang X.J."/>
            <person name="Cheng X."/>
            <person name="Yan Z.Z."/>
            <person name="Fang J."/>
            <person name="Wang X."/>
            <person name="Wang W."/>
            <person name="Liu Z.Y."/>
            <person name="Shen L.J."/>
            <person name="Zhang P."/>
            <person name="Wang P.X."/>
            <person name="Liao R."/>
            <person name="Ji Y.X."/>
            <person name="Wang J.Y."/>
            <person name="Tian S."/>
            <person name="Zhu X.Y."/>
            <person name="Zhang Y."/>
            <person name="Tian R.F."/>
            <person name="Wang L."/>
            <person name="Ma X.L."/>
            <person name="Huang Z."/>
            <person name="She Z.G."/>
            <person name="Li H."/>
        </authorList>
    </citation>
    <scope>FUNCTION</scope>
</reference>
<reference key="10">
    <citation type="journal article" date="2019" name="J. Biochem.">
        <title>GPR31 and GPR151 are activated under acidic conditions.</title>
        <authorList>
            <person name="Mashiko M."/>
            <person name="Kurosawa A."/>
            <person name="Tani Y."/>
            <person name="Tsuji T."/>
            <person name="Takeda S."/>
        </authorList>
    </citation>
    <scope>FUNCTION</scope>
    <scope>SUBCELLULAR LOCATION</scope>
</reference>
<name>GPR31_HUMAN</name>
<protein>
    <recommendedName>
        <fullName>12-(S)-hydroxy-5,8,10,14-eicosatetraenoic acid receptor</fullName>
        <shortName evidence="13">12-(S)-HETE receptor</shortName>
        <shortName evidence="13">12-HETER</shortName>
    </recommendedName>
    <alternativeName>
        <fullName evidence="15">G-protein coupled receptor 31</fullName>
    </alternativeName>
    <alternativeName>
        <fullName evidence="14">GPR31/12-HETER</fullName>
    </alternativeName>
</protein>